<organism>
    <name type="scientific">Rhodopseudomonas palustris (strain BisB5)</name>
    <dbReference type="NCBI Taxonomy" id="316057"/>
    <lineage>
        <taxon>Bacteria</taxon>
        <taxon>Pseudomonadati</taxon>
        <taxon>Pseudomonadota</taxon>
        <taxon>Alphaproteobacteria</taxon>
        <taxon>Hyphomicrobiales</taxon>
        <taxon>Nitrobacteraceae</taxon>
        <taxon>Rhodopseudomonas</taxon>
    </lineage>
</organism>
<sequence length="100" mass="11041">MQVLVRDNNVDQALKALKKKMQREGIFREMKLRGHYEKPSEKKAREKAEAVRRARKLARKKLQREGLLPMKPKPAFGADRGRPGAAGAGAGAGAGPRGPR</sequence>
<feature type="chain" id="PRO_0000266751" description="Small ribosomal subunit protein bS21">
    <location>
        <begin position="1"/>
        <end position="100"/>
    </location>
</feature>
<feature type="region of interest" description="Disordered" evidence="2">
    <location>
        <begin position="37"/>
        <end position="100"/>
    </location>
</feature>
<feature type="compositionally biased region" description="Basic and acidic residues" evidence="2">
    <location>
        <begin position="37"/>
        <end position="52"/>
    </location>
</feature>
<feature type="compositionally biased region" description="Basic residues" evidence="2">
    <location>
        <begin position="53"/>
        <end position="62"/>
    </location>
</feature>
<feature type="compositionally biased region" description="Gly residues" evidence="2">
    <location>
        <begin position="84"/>
        <end position="100"/>
    </location>
</feature>
<name>RS21_RHOPS</name>
<gene>
    <name evidence="1" type="primary">rpsU</name>
    <name type="ordered locus">RPD_1422</name>
</gene>
<comment type="similarity">
    <text evidence="1">Belongs to the bacterial ribosomal protein bS21 family.</text>
</comment>
<proteinExistence type="inferred from homology"/>
<reference key="1">
    <citation type="submission" date="2006-03" db="EMBL/GenBank/DDBJ databases">
        <title>Complete sequence of Rhodopseudomonas palustris BisB5.</title>
        <authorList>
            <consortium name="US DOE Joint Genome Institute"/>
            <person name="Copeland A."/>
            <person name="Lucas S."/>
            <person name="Lapidus A."/>
            <person name="Barry K."/>
            <person name="Detter J.C."/>
            <person name="Glavina del Rio T."/>
            <person name="Hammon N."/>
            <person name="Israni S."/>
            <person name="Dalin E."/>
            <person name="Tice H."/>
            <person name="Pitluck S."/>
            <person name="Chain P."/>
            <person name="Malfatti S."/>
            <person name="Shin M."/>
            <person name="Vergez L."/>
            <person name="Schmutz J."/>
            <person name="Larimer F."/>
            <person name="Land M."/>
            <person name="Hauser L."/>
            <person name="Pelletier D.A."/>
            <person name="Kyrpides N."/>
            <person name="Lykidis A."/>
            <person name="Oda Y."/>
            <person name="Harwood C.S."/>
            <person name="Richardson P."/>
        </authorList>
    </citation>
    <scope>NUCLEOTIDE SEQUENCE [LARGE SCALE GENOMIC DNA]</scope>
    <source>
        <strain>BisB5</strain>
    </source>
</reference>
<protein>
    <recommendedName>
        <fullName evidence="1">Small ribosomal subunit protein bS21</fullName>
    </recommendedName>
    <alternativeName>
        <fullName evidence="3">30S ribosomal protein S21</fullName>
    </alternativeName>
</protein>
<accession>Q13B80</accession>
<evidence type="ECO:0000255" key="1">
    <source>
        <dbReference type="HAMAP-Rule" id="MF_00358"/>
    </source>
</evidence>
<evidence type="ECO:0000256" key="2">
    <source>
        <dbReference type="SAM" id="MobiDB-lite"/>
    </source>
</evidence>
<evidence type="ECO:0000305" key="3"/>
<dbReference type="EMBL" id="CP000283">
    <property type="protein sequence ID" value="ABE38659.1"/>
    <property type="molecule type" value="Genomic_DNA"/>
</dbReference>
<dbReference type="SMR" id="Q13B80"/>
<dbReference type="STRING" id="316057.RPD_1422"/>
<dbReference type="KEGG" id="rpd:RPD_1422"/>
<dbReference type="eggNOG" id="COG0828">
    <property type="taxonomic scope" value="Bacteria"/>
</dbReference>
<dbReference type="HOGENOM" id="CLU_159258_0_0_5"/>
<dbReference type="BioCyc" id="RPAL316057:RPD_RS07185-MONOMER"/>
<dbReference type="Proteomes" id="UP000001818">
    <property type="component" value="Chromosome"/>
</dbReference>
<dbReference type="GO" id="GO:1990904">
    <property type="term" value="C:ribonucleoprotein complex"/>
    <property type="evidence" value="ECO:0007669"/>
    <property type="project" value="UniProtKB-KW"/>
</dbReference>
<dbReference type="GO" id="GO:0005840">
    <property type="term" value="C:ribosome"/>
    <property type="evidence" value="ECO:0007669"/>
    <property type="project" value="UniProtKB-KW"/>
</dbReference>
<dbReference type="GO" id="GO:0003735">
    <property type="term" value="F:structural constituent of ribosome"/>
    <property type="evidence" value="ECO:0007669"/>
    <property type="project" value="InterPro"/>
</dbReference>
<dbReference type="GO" id="GO:0006412">
    <property type="term" value="P:translation"/>
    <property type="evidence" value="ECO:0007669"/>
    <property type="project" value="UniProtKB-UniRule"/>
</dbReference>
<dbReference type="Gene3D" id="1.20.5.1150">
    <property type="entry name" value="Ribosomal protein S8"/>
    <property type="match status" value="1"/>
</dbReference>
<dbReference type="HAMAP" id="MF_00358">
    <property type="entry name" value="Ribosomal_bS21"/>
    <property type="match status" value="1"/>
</dbReference>
<dbReference type="InterPro" id="IPR001911">
    <property type="entry name" value="Ribosomal_bS21"/>
</dbReference>
<dbReference type="InterPro" id="IPR018278">
    <property type="entry name" value="Ribosomal_bS21_CS"/>
</dbReference>
<dbReference type="InterPro" id="IPR038380">
    <property type="entry name" value="Ribosomal_bS21_sf"/>
</dbReference>
<dbReference type="NCBIfam" id="TIGR00030">
    <property type="entry name" value="S21p"/>
    <property type="match status" value="1"/>
</dbReference>
<dbReference type="PANTHER" id="PTHR21109">
    <property type="entry name" value="MITOCHONDRIAL 28S RIBOSOMAL PROTEIN S21"/>
    <property type="match status" value="1"/>
</dbReference>
<dbReference type="PANTHER" id="PTHR21109:SF0">
    <property type="entry name" value="SMALL RIBOSOMAL SUBUNIT PROTEIN BS21M"/>
    <property type="match status" value="1"/>
</dbReference>
<dbReference type="Pfam" id="PF01165">
    <property type="entry name" value="Ribosomal_S21"/>
    <property type="match status" value="1"/>
</dbReference>
<dbReference type="PROSITE" id="PS01181">
    <property type="entry name" value="RIBOSOMAL_S21"/>
    <property type="match status" value="1"/>
</dbReference>
<keyword id="KW-0687">Ribonucleoprotein</keyword>
<keyword id="KW-0689">Ribosomal protein</keyword>